<gene>
    <name evidence="1" type="primary">caiC</name>
    <name type="ordered locus">PMI2657</name>
</gene>
<protein>
    <recommendedName>
        <fullName evidence="1">Crotonobetaine/carnitine--CoA ligase</fullName>
        <ecNumber evidence="1">6.2.1.48</ecNumber>
    </recommendedName>
</protein>
<name>CAIC_PROMH</name>
<feature type="chain" id="PRO_1000200914" description="Crotonobetaine/carnitine--CoA ligase">
    <location>
        <begin position="1"/>
        <end position="518"/>
    </location>
</feature>
<proteinExistence type="inferred from homology"/>
<reference key="1">
    <citation type="journal article" date="2008" name="J. Bacteriol.">
        <title>Complete genome sequence of uropathogenic Proteus mirabilis, a master of both adherence and motility.</title>
        <authorList>
            <person name="Pearson M.M."/>
            <person name="Sebaihia M."/>
            <person name="Churcher C."/>
            <person name="Quail M.A."/>
            <person name="Seshasayee A.S."/>
            <person name="Luscombe N.M."/>
            <person name="Abdellah Z."/>
            <person name="Arrosmith C."/>
            <person name="Atkin B."/>
            <person name="Chillingworth T."/>
            <person name="Hauser H."/>
            <person name="Jagels K."/>
            <person name="Moule S."/>
            <person name="Mungall K."/>
            <person name="Norbertczak H."/>
            <person name="Rabbinowitsch E."/>
            <person name="Walker D."/>
            <person name="Whithead S."/>
            <person name="Thomson N.R."/>
            <person name="Rather P.N."/>
            <person name="Parkhill J."/>
            <person name="Mobley H.L.T."/>
        </authorList>
    </citation>
    <scope>NUCLEOTIDE SEQUENCE [LARGE SCALE GENOMIC DNA]</scope>
    <source>
        <strain>HI4320</strain>
    </source>
</reference>
<keyword id="KW-0436">Ligase</keyword>
<keyword id="KW-1185">Reference proteome</keyword>
<dbReference type="EC" id="6.2.1.48" evidence="1"/>
<dbReference type="EMBL" id="AM942759">
    <property type="protein sequence ID" value="CAR45236.1"/>
    <property type="molecule type" value="Genomic_DNA"/>
</dbReference>
<dbReference type="RefSeq" id="WP_012368455.1">
    <property type="nucleotide sequence ID" value="NC_010554.1"/>
</dbReference>
<dbReference type="SMR" id="B4EY25"/>
<dbReference type="EnsemblBacteria" id="CAR45236">
    <property type="protein sequence ID" value="CAR45236"/>
    <property type="gene ID" value="PMI2657"/>
</dbReference>
<dbReference type="GeneID" id="6803547"/>
<dbReference type="KEGG" id="pmr:PMI2657"/>
<dbReference type="PATRIC" id="fig|529507.6.peg.2585"/>
<dbReference type="eggNOG" id="COG0318">
    <property type="taxonomic scope" value="Bacteria"/>
</dbReference>
<dbReference type="HOGENOM" id="CLU_000022_59_0_6"/>
<dbReference type="UniPathway" id="UPA00117"/>
<dbReference type="Proteomes" id="UP000008319">
    <property type="component" value="Chromosome"/>
</dbReference>
<dbReference type="GO" id="GO:0016878">
    <property type="term" value="F:acid-thiol ligase activity"/>
    <property type="evidence" value="ECO:0007669"/>
    <property type="project" value="InterPro"/>
</dbReference>
<dbReference type="GO" id="GO:0051108">
    <property type="term" value="F:carnitine-CoA ligase activity"/>
    <property type="evidence" value="ECO:0007669"/>
    <property type="project" value="InterPro"/>
</dbReference>
<dbReference type="GO" id="GO:0051109">
    <property type="term" value="F:crotonobetaine-CoA ligase activity"/>
    <property type="evidence" value="ECO:0007669"/>
    <property type="project" value="InterPro"/>
</dbReference>
<dbReference type="GO" id="GO:0009437">
    <property type="term" value="P:carnitine metabolic process"/>
    <property type="evidence" value="ECO:0007669"/>
    <property type="project" value="UniProtKB-UniRule"/>
</dbReference>
<dbReference type="CDD" id="cd05934">
    <property type="entry name" value="FACL_DitJ_like"/>
    <property type="match status" value="1"/>
</dbReference>
<dbReference type="FunFam" id="3.30.300.30:FF:000011">
    <property type="entry name" value="Crotonobetaine/carnitine--CoA ligase"/>
    <property type="match status" value="1"/>
</dbReference>
<dbReference type="Gene3D" id="3.30.300.30">
    <property type="match status" value="1"/>
</dbReference>
<dbReference type="Gene3D" id="3.40.50.12780">
    <property type="entry name" value="N-terminal domain of ligase-like"/>
    <property type="match status" value="1"/>
</dbReference>
<dbReference type="HAMAP" id="MF_01524">
    <property type="entry name" value="CaiC"/>
    <property type="match status" value="1"/>
</dbReference>
<dbReference type="InterPro" id="IPR025110">
    <property type="entry name" value="AMP-bd_C"/>
</dbReference>
<dbReference type="InterPro" id="IPR045851">
    <property type="entry name" value="AMP-bd_C_sf"/>
</dbReference>
<dbReference type="InterPro" id="IPR020845">
    <property type="entry name" value="AMP-binding_CS"/>
</dbReference>
<dbReference type="InterPro" id="IPR000873">
    <property type="entry name" value="AMP-dep_synth/lig_dom"/>
</dbReference>
<dbReference type="InterPro" id="IPR042099">
    <property type="entry name" value="ANL_N_sf"/>
</dbReference>
<dbReference type="InterPro" id="IPR050237">
    <property type="entry name" value="ATP-dep_AMP-bd_enzyme"/>
</dbReference>
<dbReference type="InterPro" id="IPR023456">
    <property type="entry name" value="CaiC"/>
</dbReference>
<dbReference type="NCBIfam" id="NF005947">
    <property type="entry name" value="PRK08008.1"/>
    <property type="match status" value="1"/>
</dbReference>
<dbReference type="PANTHER" id="PTHR43767">
    <property type="entry name" value="LONG-CHAIN-FATTY-ACID--COA LIGASE"/>
    <property type="match status" value="1"/>
</dbReference>
<dbReference type="PANTHER" id="PTHR43767:SF1">
    <property type="entry name" value="NONRIBOSOMAL PEPTIDE SYNTHASE PES1 (EUROFUNG)-RELATED"/>
    <property type="match status" value="1"/>
</dbReference>
<dbReference type="Pfam" id="PF00501">
    <property type="entry name" value="AMP-binding"/>
    <property type="match status" value="1"/>
</dbReference>
<dbReference type="Pfam" id="PF13193">
    <property type="entry name" value="AMP-binding_C"/>
    <property type="match status" value="1"/>
</dbReference>
<dbReference type="SUPFAM" id="SSF56801">
    <property type="entry name" value="Acetyl-CoA synthetase-like"/>
    <property type="match status" value="1"/>
</dbReference>
<dbReference type="PROSITE" id="PS00455">
    <property type="entry name" value="AMP_BINDING"/>
    <property type="match status" value="1"/>
</dbReference>
<comment type="function">
    <text evidence="1">Catalyzes the transfer of CoA to carnitine, generating the initial carnitinyl-CoA needed for the CaiB reaction cycle. Also has activity toward crotonobetaine and gamma-butyrobetaine.</text>
</comment>
<comment type="catalytic activity">
    <reaction evidence="1">
        <text>4-(trimethylamino)butanoate + ATP + CoA = 4-(trimethylamino)butanoyl-CoA + AMP + diphosphate</text>
        <dbReference type="Rhea" id="RHEA:55960"/>
        <dbReference type="ChEBI" id="CHEBI:16244"/>
        <dbReference type="ChEBI" id="CHEBI:30616"/>
        <dbReference type="ChEBI" id="CHEBI:33019"/>
        <dbReference type="ChEBI" id="CHEBI:57287"/>
        <dbReference type="ChEBI" id="CHEBI:61513"/>
        <dbReference type="ChEBI" id="CHEBI:456215"/>
        <dbReference type="EC" id="6.2.1.48"/>
    </reaction>
</comment>
<comment type="catalytic activity">
    <reaction evidence="1">
        <text>crotonobetaine + ATP + CoA = crotonobetainyl-CoA + AMP + diphosphate</text>
        <dbReference type="Rhea" id="RHEA:30079"/>
        <dbReference type="ChEBI" id="CHEBI:17237"/>
        <dbReference type="ChEBI" id="CHEBI:30616"/>
        <dbReference type="ChEBI" id="CHEBI:33019"/>
        <dbReference type="ChEBI" id="CHEBI:57287"/>
        <dbReference type="ChEBI" id="CHEBI:60933"/>
        <dbReference type="ChEBI" id="CHEBI:456215"/>
        <dbReference type="EC" id="6.2.1.48"/>
    </reaction>
</comment>
<comment type="catalytic activity">
    <reaction evidence="1">
        <text>(R)-carnitine + ATP + CoA = (R)-carnitinyl-CoA + AMP + diphosphate</text>
        <dbReference type="Rhea" id="RHEA:28514"/>
        <dbReference type="ChEBI" id="CHEBI:16347"/>
        <dbReference type="ChEBI" id="CHEBI:30616"/>
        <dbReference type="ChEBI" id="CHEBI:33019"/>
        <dbReference type="ChEBI" id="CHEBI:57287"/>
        <dbReference type="ChEBI" id="CHEBI:60932"/>
        <dbReference type="ChEBI" id="CHEBI:456215"/>
        <dbReference type="EC" id="6.2.1.48"/>
    </reaction>
</comment>
<comment type="pathway">
    <text evidence="1">Amine and polyamine metabolism; carnitine metabolism.</text>
</comment>
<comment type="similarity">
    <text evidence="1">Belongs to the ATP-dependent AMP-binding enzyme family.</text>
</comment>
<accession>B4EY25</accession>
<organism>
    <name type="scientific">Proteus mirabilis (strain HI4320)</name>
    <dbReference type="NCBI Taxonomy" id="529507"/>
    <lineage>
        <taxon>Bacteria</taxon>
        <taxon>Pseudomonadati</taxon>
        <taxon>Pseudomonadota</taxon>
        <taxon>Gammaproteobacteria</taxon>
        <taxon>Enterobacterales</taxon>
        <taxon>Morganellaceae</taxon>
        <taxon>Proteus</taxon>
    </lineage>
</organism>
<evidence type="ECO:0000255" key="1">
    <source>
        <dbReference type="HAMAP-Rule" id="MF_01524"/>
    </source>
</evidence>
<sequence>MDVIGRQHLRQMWDDLAEVYDKKTALIFESAQGKVRQFSYSELNEEINRAANLFHACGIKKGDHVALHLDNCPEFFFCWFGLAKIGAVMVPINARFMYEESAWIINHCQAHFVVTSDNFSPIYQPMLHDKHSPLTQLFLITENCLPTEQGVVDFLSEKAKHPVTLNHHTPLSVDDTAEILFTSGTTSQPKGVVITHYNLRFAGYYSSWQNALREDDIYLTVMPAFHIDCQCTASLPAFSVGATFVLLEKYSARAFWKQILKYQATVTECIPMMMRTLMAQPVSPDEKQHKLREVMFYLNLADEEKDAFIERFNVRLLTSYGMTETIVGLIGDRPGDKRRWPSIGRPGFCYQAQIRDKQNQQVPNGVVGEICVKGEPGKTLFKEYYNRPDATEKALEPDGWLHTGDYGYQDDEGFFYFVDRSCNMIKRGGENVSCIEIENIIASHPKIQDVAVIGVPDDIRDEAIKAFVVLVDGETLSEEAFFAFCEQNMAKFKVPSAVEFKQGLPRNCSGKVIKKHLQ</sequence>